<proteinExistence type="evidence at protein level"/>
<feature type="chain" id="PRO_0000443492" description="Ion-translocating oxidoreductase complex subunit D">
    <location>
        <begin position="1"/>
        <end position="288"/>
    </location>
</feature>
<feature type="transmembrane region" description="Helical" evidence="1">
    <location>
        <begin position="26"/>
        <end position="46"/>
    </location>
</feature>
<feature type="transmembrane region" description="Helical" evidence="1">
    <location>
        <begin position="47"/>
        <end position="67"/>
    </location>
</feature>
<feature type="transmembrane region" description="Helical" evidence="1">
    <location>
        <begin position="80"/>
        <end position="100"/>
    </location>
</feature>
<feature type="transmembrane region" description="Helical" evidence="1">
    <location>
        <begin position="101"/>
        <end position="121"/>
    </location>
</feature>
<feature type="transmembrane region" description="Helical" evidence="1">
    <location>
        <begin position="126"/>
        <end position="146"/>
    </location>
</feature>
<feature type="transmembrane region" description="Helical" evidence="1">
    <location>
        <begin position="159"/>
        <end position="179"/>
    </location>
</feature>
<feature type="transmembrane region" description="Helical" evidence="1">
    <location>
        <begin position="200"/>
        <end position="220"/>
    </location>
</feature>
<feature type="transmembrane region" description="Helical" evidence="1">
    <location>
        <begin position="235"/>
        <end position="255"/>
    </location>
</feature>
<feature type="transmembrane region" description="Helical" evidence="1">
    <location>
        <begin position="256"/>
        <end position="276"/>
    </location>
</feature>
<keyword id="KW-1003">Cell membrane</keyword>
<keyword id="KW-0249">Electron transport</keyword>
<keyword id="KW-0285">Flavoprotein</keyword>
<keyword id="KW-0288">FMN</keyword>
<keyword id="KW-0472">Membrane</keyword>
<keyword id="KW-0597">Phosphoprotein</keyword>
<keyword id="KW-1185">Reference proteome</keyword>
<keyword id="KW-1278">Translocase</keyword>
<keyword id="KW-0812">Transmembrane</keyword>
<keyword id="KW-1133">Transmembrane helix</keyword>
<keyword id="KW-0813">Transport</keyword>
<sequence>MTSFTVSPPPHIKKKIFIKNLIWSRIVALLPISAAAVYFFGFAALGNIIASILGAVGIEFVIQKAFNKKLTIMDGNAIYLGLLLALICPPTLPAWMIFIGGAFAVGVGKHAFGGIGSYTFHPSLAAWVFLSLAWAQDMLPGTIPILSSFSDLILENGAGFLTDVSPILVLLAGVILILVKYIEWRIPLSYLLTTVILALVLGDPLAYVVSGTFLLGVFFIATETVTSPVTQNGRIVYGILCGFLTVIYGYFSGNYVWGTLYALLLSNAVAPFIELKTLPKPMGGVANE</sequence>
<gene>
    <name evidence="1" type="primary">rnfD</name>
    <name evidence="5" type="ordered locus">MA_0660</name>
</gene>
<accession>Q8TSY3</accession>
<organism>
    <name type="scientific">Methanosarcina acetivorans (strain ATCC 35395 / DSM 2834 / JCM 12185 / C2A)</name>
    <dbReference type="NCBI Taxonomy" id="188937"/>
    <lineage>
        <taxon>Archaea</taxon>
        <taxon>Methanobacteriati</taxon>
        <taxon>Methanobacteriota</taxon>
        <taxon>Stenosarchaea group</taxon>
        <taxon>Methanomicrobia</taxon>
        <taxon>Methanosarcinales</taxon>
        <taxon>Methanosarcinaceae</taxon>
        <taxon>Methanosarcina</taxon>
    </lineage>
</organism>
<comment type="function">
    <text evidence="2">Part of a membrane-bound complex that couples electron transfer with translocation of ions across the membrane. Catalyzes Na(+) transport, most probably coupled to electron transfer from reduced ferredoxin to methanophenazine and heterodisulfide reductase. Involved in heterodisulfide reduction during methanogenesis from acetate.</text>
</comment>
<comment type="cofactor">
    <cofactor evidence="1">
        <name>FMN</name>
        <dbReference type="ChEBI" id="CHEBI:58210"/>
    </cofactor>
</comment>
<comment type="subunit">
    <text evidence="1 4">The Rnf complex is probably composed of eight subunits, including RnfA, RnfB, RnfC, RnfD, RnfE and RnfG.</text>
</comment>
<comment type="subcellular location">
    <subcellularLocation>
        <location evidence="1">Cell membrane</location>
        <topology evidence="1">Multi-pass membrane protein</topology>
    </subcellularLocation>
</comment>
<comment type="disruption phenotype">
    <text evidence="2">Deletion of the rnf operon abolishes growth on acetate and ferredoxin:heterodisulfide oxidoreductase-coupled Na(+) transport.</text>
</comment>
<comment type="similarity">
    <text evidence="1">Belongs to the NqrB/RnfD family.</text>
</comment>
<evidence type="ECO:0000255" key="1">
    <source>
        <dbReference type="HAMAP-Rule" id="MF_00462"/>
    </source>
</evidence>
<evidence type="ECO:0000269" key="2">
    <source>
    </source>
</evidence>
<evidence type="ECO:0000305" key="3"/>
<evidence type="ECO:0000305" key="4">
    <source>
    </source>
</evidence>
<evidence type="ECO:0000312" key="5">
    <source>
        <dbReference type="EMBL" id="AAM04102.1"/>
    </source>
</evidence>
<protein>
    <recommendedName>
        <fullName evidence="1 3">Ion-translocating oxidoreductase complex subunit D</fullName>
        <ecNumber evidence="1 3">7.2.1.-</ecNumber>
    </recommendedName>
    <alternativeName>
        <fullName evidence="1 3">Rnf electron transport complex subunit D</fullName>
    </alternativeName>
</protein>
<reference key="1">
    <citation type="journal article" date="2002" name="Genome Res.">
        <title>The genome of Methanosarcina acetivorans reveals extensive metabolic and physiological diversity.</title>
        <authorList>
            <person name="Galagan J.E."/>
            <person name="Nusbaum C."/>
            <person name="Roy A."/>
            <person name="Endrizzi M.G."/>
            <person name="Macdonald P."/>
            <person name="FitzHugh W."/>
            <person name="Calvo S."/>
            <person name="Engels R."/>
            <person name="Smirnov S."/>
            <person name="Atnoor D."/>
            <person name="Brown A."/>
            <person name="Allen N."/>
            <person name="Naylor J."/>
            <person name="Stange-Thomann N."/>
            <person name="DeArellano K."/>
            <person name="Johnson R."/>
            <person name="Linton L."/>
            <person name="McEwan P."/>
            <person name="McKernan K."/>
            <person name="Talamas J."/>
            <person name="Tirrell A."/>
            <person name="Ye W."/>
            <person name="Zimmer A."/>
            <person name="Barber R.D."/>
            <person name="Cann I."/>
            <person name="Graham D.E."/>
            <person name="Grahame D.A."/>
            <person name="Guss A.M."/>
            <person name="Hedderich R."/>
            <person name="Ingram-Smith C."/>
            <person name="Kuettner H.C."/>
            <person name="Krzycki J.A."/>
            <person name="Leigh J.A."/>
            <person name="Li W."/>
            <person name="Liu J."/>
            <person name="Mukhopadhyay B."/>
            <person name="Reeve J.N."/>
            <person name="Smith K."/>
            <person name="Springer T.A."/>
            <person name="Umayam L.A."/>
            <person name="White O."/>
            <person name="White R.H."/>
            <person name="de Macario E.C."/>
            <person name="Ferry J.G."/>
            <person name="Jarrell K.F."/>
            <person name="Jing H."/>
            <person name="Macario A.J.L."/>
            <person name="Paulsen I.T."/>
            <person name="Pritchett M."/>
            <person name="Sowers K.R."/>
            <person name="Swanson R.V."/>
            <person name="Zinder S.H."/>
            <person name="Lander E."/>
            <person name="Metcalf W.W."/>
            <person name="Birren B."/>
        </authorList>
    </citation>
    <scope>NUCLEOTIDE SEQUENCE [LARGE SCALE GENOMIC DNA]</scope>
    <source>
        <strain>ATCC 35395 / DSM 2834 / JCM 12185 / C2A</strain>
    </source>
</reference>
<reference key="2">
    <citation type="journal article" date="2012" name="FEBS J.">
        <title>Electron transport during aceticlastic methanogenesis by Methanosarcina acetivorans involves a sodium-translocating Rnf complex.</title>
        <authorList>
            <person name="Schlegel K."/>
            <person name="Welte C."/>
            <person name="Deppenmeier U."/>
            <person name="Mueller V."/>
        </authorList>
    </citation>
    <scope>FUNCTION</scope>
    <scope>SUBUNIT</scope>
    <scope>DISRUPTION PHENOTYPE</scope>
    <source>
        <strain>ATCC 35395 / DSM 2834 / JCM 12185 / C2A</strain>
    </source>
</reference>
<dbReference type="EC" id="7.2.1.-" evidence="1 3"/>
<dbReference type="EMBL" id="AE010299">
    <property type="protein sequence ID" value="AAM04102.1"/>
    <property type="molecule type" value="Genomic_DNA"/>
</dbReference>
<dbReference type="RefSeq" id="WP_011020707.1">
    <property type="nucleotide sequence ID" value="NC_003552.1"/>
</dbReference>
<dbReference type="SMR" id="Q8TSY3"/>
<dbReference type="STRING" id="188937.MA_0660"/>
<dbReference type="TCDB" id="3.D.6.1.3">
    <property type="family name" value="the ion (h(+) or na(+))-translocating nadh:ferredoxin oxidoreductase (nfo or rnf) family"/>
</dbReference>
<dbReference type="EnsemblBacteria" id="AAM04102">
    <property type="protein sequence ID" value="AAM04102"/>
    <property type="gene ID" value="MA_0660"/>
</dbReference>
<dbReference type="GeneID" id="1472552"/>
<dbReference type="KEGG" id="mac:MA_0660"/>
<dbReference type="HOGENOM" id="CLU_042020_1_0_2"/>
<dbReference type="InParanoid" id="Q8TSY3"/>
<dbReference type="OrthoDB" id="133092at2157"/>
<dbReference type="PhylomeDB" id="Q8TSY3"/>
<dbReference type="BRENDA" id="7.2.1.2">
    <property type="organism ID" value="7224"/>
</dbReference>
<dbReference type="Proteomes" id="UP000002487">
    <property type="component" value="Chromosome"/>
</dbReference>
<dbReference type="GO" id="GO:0005886">
    <property type="term" value="C:plasma membrane"/>
    <property type="evidence" value="ECO:0000318"/>
    <property type="project" value="GO_Central"/>
</dbReference>
<dbReference type="GO" id="GO:0022900">
    <property type="term" value="P:electron transport chain"/>
    <property type="evidence" value="ECO:0007669"/>
    <property type="project" value="UniProtKB-UniRule"/>
</dbReference>
<dbReference type="GO" id="GO:0055085">
    <property type="term" value="P:transmembrane transport"/>
    <property type="evidence" value="ECO:0007669"/>
    <property type="project" value="InterPro"/>
</dbReference>
<dbReference type="HAMAP" id="MF_00462">
    <property type="entry name" value="RsxD_RnfD"/>
    <property type="match status" value="1"/>
</dbReference>
<dbReference type="InterPro" id="IPR049685">
    <property type="entry name" value="Ion_transpt_RnfD_Methano"/>
</dbReference>
<dbReference type="InterPro" id="IPR004338">
    <property type="entry name" value="NqrB/RnfD"/>
</dbReference>
<dbReference type="InterPro" id="IPR011303">
    <property type="entry name" value="RnfD_bac"/>
</dbReference>
<dbReference type="NCBIfam" id="NF041838">
    <property type="entry name" value="rnfD_Methano"/>
    <property type="match status" value="1"/>
</dbReference>
<dbReference type="PANTHER" id="PTHR30578">
    <property type="entry name" value="ELECTRON TRANSPORT COMPLEX PROTEIN RNFD"/>
    <property type="match status" value="1"/>
</dbReference>
<dbReference type="PANTHER" id="PTHR30578:SF0">
    <property type="entry name" value="ION-TRANSLOCATING OXIDOREDUCTASE COMPLEX SUBUNIT D"/>
    <property type="match status" value="1"/>
</dbReference>
<dbReference type="Pfam" id="PF03116">
    <property type="entry name" value="NQR2_RnfD_RnfE"/>
    <property type="match status" value="1"/>
</dbReference>
<name>RNFD_METAC</name>